<reference key="1">
    <citation type="submission" date="2005-10" db="EMBL/GenBank/DDBJ databases">
        <title>Complete sequence of Pelobacter carbinolicus DSM 2380.</title>
        <authorList>
            <person name="Copeland A."/>
            <person name="Lucas S."/>
            <person name="Lapidus A."/>
            <person name="Barry K."/>
            <person name="Detter J.C."/>
            <person name="Glavina T."/>
            <person name="Hammon N."/>
            <person name="Israni S."/>
            <person name="Pitluck S."/>
            <person name="Chertkov O."/>
            <person name="Schmutz J."/>
            <person name="Larimer F."/>
            <person name="Land M."/>
            <person name="Kyrpides N."/>
            <person name="Ivanova N."/>
            <person name="Richardson P."/>
        </authorList>
    </citation>
    <scope>NUCLEOTIDE SEQUENCE [LARGE SCALE GENOMIC DNA]</scope>
    <source>
        <strain>DSM 2380 / NBRC 103641 / GraBd1</strain>
    </source>
</reference>
<name>SYP_SYNC1</name>
<accession>Q3A6R6</accession>
<comment type="function">
    <text evidence="1">Catalyzes the attachment of proline to tRNA(Pro) in a two-step reaction: proline is first activated by ATP to form Pro-AMP and then transferred to the acceptor end of tRNA(Pro). As ProRS can inadvertently accommodate and process non-cognate amino acids such as alanine and cysteine, to avoid such errors it has two additional distinct editing activities against alanine. One activity is designated as 'pretransfer' editing and involves the tRNA(Pro)-independent hydrolysis of activated Ala-AMP. The other activity is designated 'posttransfer' editing and involves deacylation of mischarged Ala-tRNA(Pro). The misacylated Cys-tRNA(Pro) is not edited by ProRS.</text>
</comment>
<comment type="catalytic activity">
    <reaction evidence="1">
        <text>tRNA(Pro) + L-proline + ATP = L-prolyl-tRNA(Pro) + AMP + diphosphate</text>
        <dbReference type="Rhea" id="RHEA:14305"/>
        <dbReference type="Rhea" id="RHEA-COMP:9700"/>
        <dbReference type="Rhea" id="RHEA-COMP:9702"/>
        <dbReference type="ChEBI" id="CHEBI:30616"/>
        <dbReference type="ChEBI" id="CHEBI:33019"/>
        <dbReference type="ChEBI" id="CHEBI:60039"/>
        <dbReference type="ChEBI" id="CHEBI:78442"/>
        <dbReference type="ChEBI" id="CHEBI:78532"/>
        <dbReference type="ChEBI" id="CHEBI:456215"/>
        <dbReference type="EC" id="6.1.1.15"/>
    </reaction>
</comment>
<comment type="subunit">
    <text evidence="1">Homodimer.</text>
</comment>
<comment type="subcellular location">
    <subcellularLocation>
        <location evidence="1">Cytoplasm</location>
    </subcellularLocation>
</comment>
<comment type="domain">
    <text evidence="1">Consists of three domains: the N-terminal catalytic domain, the editing domain and the C-terminal anticodon-binding domain.</text>
</comment>
<comment type="similarity">
    <text evidence="1">Belongs to the class-II aminoacyl-tRNA synthetase family. ProS type 1 subfamily.</text>
</comment>
<evidence type="ECO:0000255" key="1">
    <source>
        <dbReference type="HAMAP-Rule" id="MF_01569"/>
    </source>
</evidence>
<sequence>MRYTDYLLPTLKETPSDAEVISHKLMLRAGMIRKLAAGIYNYLPFGLRSIRKVEQIVREEMDRAGAMELLMPMVVPSELWEESGRWEHYGKELLRFTDRKDASFCLGPTHEEVITDLVRNTVRSYRQLPLNLYQIQGKFRDEIRPRFGLMRGREFIMKDAYSFDIDEAGADVAYEKMYQAYRRIFERCGLKFRAVEADTGNIGGSSSHEFMVLAASGEDAIVSCGQCEYAANIEKAEVALTASDTPVAAAELARVDTPGCKSIEEVAAFLKVDKERLVKTLIVQTDAGETLAVLLRGNHELNDIKLCRLLGCNEITLAPDDVVGKVTGAAPGFAGPVDLSLRVLADFAVQGMADFVTGANAADTHYVGVNLERDFTVEQFADLRAAEAGDICPRCGGVLEIWRGIEVGHVFKLGTKYSAALGATVLDDQGQDRELFMGCYGIGVGRTVAAAIEQNHDENGIVFPMPIAPFHVLVTVVNPRQEEVLAAAENLYAELQALGVEVLLDDRDERPGSKFKDADLIGIPLRLTVGARGLKENAVELQERAGGERRMLPLAEAAALVRDMVVEACGR</sequence>
<proteinExistence type="inferred from homology"/>
<feature type="chain" id="PRO_0000248734" description="Proline--tRNA ligase">
    <location>
        <begin position="1"/>
        <end position="571"/>
    </location>
</feature>
<keyword id="KW-0030">Aminoacyl-tRNA synthetase</keyword>
<keyword id="KW-0067">ATP-binding</keyword>
<keyword id="KW-0963">Cytoplasm</keyword>
<keyword id="KW-0436">Ligase</keyword>
<keyword id="KW-0547">Nucleotide-binding</keyword>
<keyword id="KW-0648">Protein biosynthesis</keyword>
<keyword id="KW-1185">Reference proteome</keyword>
<protein>
    <recommendedName>
        <fullName evidence="1">Proline--tRNA ligase</fullName>
        <ecNumber evidence="1">6.1.1.15</ecNumber>
    </recommendedName>
    <alternativeName>
        <fullName evidence="1">Prolyl-tRNA synthetase</fullName>
        <shortName evidence="1">ProRS</shortName>
    </alternativeName>
</protein>
<dbReference type="EC" id="6.1.1.15" evidence="1"/>
<dbReference type="EMBL" id="CP000142">
    <property type="protein sequence ID" value="ABA87941.1"/>
    <property type="molecule type" value="Genomic_DNA"/>
</dbReference>
<dbReference type="RefSeq" id="WP_011340384.1">
    <property type="nucleotide sequence ID" value="NC_007498.2"/>
</dbReference>
<dbReference type="SMR" id="Q3A6R6"/>
<dbReference type="STRING" id="338963.Pcar_0682"/>
<dbReference type="KEGG" id="pca:Pcar_0682"/>
<dbReference type="eggNOG" id="COG0442">
    <property type="taxonomic scope" value="Bacteria"/>
</dbReference>
<dbReference type="HOGENOM" id="CLU_016739_0_0_7"/>
<dbReference type="OrthoDB" id="9809052at2"/>
<dbReference type="Proteomes" id="UP000002534">
    <property type="component" value="Chromosome"/>
</dbReference>
<dbReference type="GO" id="GO:0005829">
    <property type="term" value="C:cytosol"/>
    <property type="evidence" value="ECO:0007669"/>
    <property type="project" value="TreeGrafter"/>
</dbReference>
<dbReference type="GO" id="GO:0002161">
    <property type="term" value="F:aminoacyl-tRNA deacylase activity"/>
    <property type="evidence" value="ECO:0007669"/>
    <property type="project" value="InterPro"/>
</dbReference>
<dbReference type="GO" id="GO:0005524">
    <property type="term" value="F:ATP binding"/>
    <property type="evidence" value="ECO:0007669"/>
    <property type="project" value="UniProtKB-UniRule"/>
</dbReference>
<dbReference type="GO" id="GO:0004827">
    <property type="term" value="F:proline-tRNA ligase activity"/>
    <property type="evidence" value="ECO:0007669"/>
    <property type="project" value="UniProtKB-UniRule"/>
</dbReference>
<dbReference type="GO" id="GO:0006433">
    <property type="term" value="P:prolyl-tRNA aminoacylation"/>
    <property type="evidence" value="ECO:0007669"/>
    <property type="project" value="UniProtKB-UniRule"/>
</dbReference>
<dbReference type="CDD" id="cd04334">
    <property type="entry name" value="ProRS-INS"/>
    <property type="match status" value="1"/>
</dbReference>
<dbReference type="CDD" id="cd00861">
    <property type="entry name" value="ProRS_anticodon_short"/>
    <property type="match status" value="1"/>
</dbReference>
<dbReference type="CDD" id="cd00779">
    <property type="entry name" value="ProRS_core_prok"/>
    <property type="match status" value="1"/>
</dbReference>
<dbReference type="FunFam" id="3.30.930.10:FF:000012">
    <property type="entry name" value="Proline--tRNA ligase"/>
    <property type="match status" value="1"/>
</dbReference>
<dbReference type="FunFam" id="3.30.930.10:FF:000065">
    <property type="entry name" value="Proline--tRNA ligase"/>
    <property type="match status" value="1"/>
</dbReference>
<dbReference type="Gene3D" id="3.40.50.800">
    <property type="entry name" value="Anticodon-binding domain"/>
    <property type="match status" value="1"/>
</dbReference>
<dbReference type="Gene3D" id="3.30.930.10">
    <property type="entry name" value="Bira Bifunctional Protein, Domain 2"/>
    <property type="match status" value="2"/>
</dbReference>
<dbReference type="HAMAP" id="MF_01569">
    <property type="entry name" value="Pro_tRNA_synth_type1"/>
    <property type="match status" value="1"/>
</dbReference>
<dbReference type="InterPro" id="IPR002314">
    <property type="entry name" value="aa-tRNA-synt_IIb"/>
</dbReference>
<dbReference type="InterPro" id="IPR006195">
    <property type="entry name" value="aa-tRNA-synth_II"/>
</dbReference>
<dbReference type="InterPro" id="IPR045864">
    <property type="entry name" value="aa-tRNA-synth_II/BPL/LPL"/>
</dbReference>
<dbReference type="InterPro" id="IPR004154">
    <property type="entry name" value="Anticodon-bd"/>
</dbReference>
<dbReference type="InterPro" id="IPR036621">
    <property type="entry name" value="Anticodon-bd_dom_sf"/>
</dbReference>
<dbReference type="InterPro" id="IPR002316">
    <property type="entry name" value="Pro-tRNA-ligase_IIa"/>
</dbReference>
<dbReference type="InterPro" id="IPR004500">
    <property type="entry name" value="Pro-tRNA-synth_IIa_bac-type"/>
</dbReference>
<dbReference type="InterPro" id="IPR023717">
    <property type="entry name" value="Pro-tRNA-Synthase_IIa_type1"/>
</dbReference>
<dbReference type="InterPro" id="IPR050062">
    <property type="entry name" value="Pro-tRNA_synthetase"/>
</dbReference>
<dbReference type="InterPro" id="IPR044140">
    <property type="entry name" value="ProRS_anticodon_short"/>
</dbReference>
<dbReference type="InterPro" id="IPR033730">
    <property type="entry name" value="ProRS_core_prok"/>
</dbReference>
<dbReference type="InterPro" id="IPR036754">
    <property type="entry name" value="YbaK/aa-tRNA-synt-asso_dom_sf"/>
</dbReference>
<dbReference type="InterPro" id="IPR007214">
    <property type="entry name" value="YbaK/aa-tRNA-synth-assoc-dom"/>
</dbReference>
<dbReference type="NCBIfam" id="NF006625">
    <property type="entry name" value="PRK09194.1"/>
    <property type="match status" value="1"/>
</dbReference>
<dbReference type="NCBIfam" id="TIGR00409">
    <property type="entry name" value="proS_fam_II"/>
    <property type="match status" value="1"/>
</dbReference>
<dbReference type="PANTHER" id="PTHR42753">
    <property type="entry name" value="MITOCHONDRIAL RIBOSOME PROTEIN L39/PROLYL-TRNA LIGASE FAMILY MEMBER"/>
    <property type="match status" value="1"/>
</dbReference>
<dbReference type="PANTHER" id="PTHR42753:SF2">
    <property type="entry name" value="PROLINE--TRNA LIGASE"/>
    <property type="match status" value="1"/>
</dbReference>
<dbReference type="Pfam" id="PF03129">
    <property type="entry name" value="HGTP_anticodon"/>
    <property type="match status" value="1"/>
</dbReference>
<dbReference type="Pfam" id="PF00587">
    <property type="entry name" value="tRNA-synt_2b"/>
    <property type="match status" value="1"/>
</dbReference>
<dbReference type="Pfam" id="PF04073">
    <property type="entry name" value="tRNA_edit"/>
    <property type="match status" value="1"/>
</dbReference>
<dbReference type="PIRSF" id="PIRSF001535">
    <property type="entry name" value="ProRS_1"/>
    <property type="match status" value="1"/>
</dbReference>
<dbReference type="PRINTS" id="PR01046">
    <property type="entry name" value="TRNASYNTHPRO"/>
</dbReference>
<dbReference type="SUPFAM" id="SSF52954">
    <property type="entry name" value="Class II aaRS ABD-related"/>
    <property type="match status" value="1"/>
</dbReference>
<dbReference type="SUPFAM" id="SSF55681">
    <property type="entry name" value="Class II aaRS and biotin synthetases"/>
    <property type="match status" value="1"/>
</dbReference>
<dbReference type="SUPFAM" id="SSF55826">
    <property type="entry name" value="YbaK/ProRS associated domain"/>
    <property type="match status" value="1"/>
</dbReference>
<dbReference type="PROSITE" id="PS50862">
    <property type="entry name" value="AA_TRNA_LIGASE_II"/>
    <property type="match status" value="1"/>
</dbReference>
<organism>
    <name type="scientific">Syntrophotalea carbinolica (strain DSM 2380 / NBRC 103641 / GraBd1)</name>
    <name type="common">Pelobacter carbinolicus</name>
    <dbReference type="NCBI Taxonomy" id="338963"/>
    <lineage>
        <taxon>Bacteria</taxon>
        <taxon>Pseudomonadati</taxon>
        <taxon>Thermodesulfobacteriota</taxon>
        <taxon>Desulfuromonadia</taxon>
        <taxon>Desulfuromonadales</taxon>
        <taxon>Syntrophotaleaceae</taxon>
        <taxon>Syntrophotalea</taxon>
    </lineage>
</organism>
<gene>
    <name evidence="1" type="primary">proS</name>
    <name type="ordered locus">Pcar_0682</name>
</gene>